<organismHost>
    <name type="scientific">Homo sapiens</name>
    <name type="common">Human</name>
    <dbReference type="NCBI Taxonomy" id="9606"/>
</organismHost>
<feature type="chain" id="PRO_0000409221" description="Accessory protein p12I">
    <location>
        <begin position="1"/>
        <end position="99"/>
    </location>
</feature>
<feature type="transmembrane region" description="Helical" evidence="2">
    <location>
        <begin position="12"/>
        <end position="32"/>
    </location>
</feature>
<feature type="transmembrane region" description="Helical" evidence="2">
    <location>
        <begin position="48"/>
        <end position="68"/>
    </location>
</feature>
<feature type="short sequence motif" description="SH3-binding" evidence="2">
    <location>
        <begin position="4"/>
        <end position="11"/>
    </location>
</feature>
<feature type="short sequence motif" description="SH3-binding" evidence="2">
    <location>
        <begin position="33"/>
        <end position="38"/>
    </location>
</feature>
<feature type="short sequence motif" description="SH3-binding" evidence="2">
    <location>
        <begin position="70"/>
        <end position="77"/>
    </location>
</feature>
<feature type="short sequence motif" description="SH3-binding" evidence="2">
    <location>
        <begin position="88"/>
        <end position="93"/>
    </location>
</feature>
<feature type="splice variant" id="VSP_041272" description="In isoform p27I." evidence="3">
    <original>M</original>
    <variation>MPKTRRRPRRSQRKRPPTPWQPPPFSLQGLHLAFQLSSIAINPQLLHFFFPST</variation>
    <location>
        <position position="1"/>
    </location>
</feature>
<sequence>MLFRLLSPLSPLALTALLLFLLSPGEVSGLLLRPLPAPCLLLFLPFQILSNLLFLLFLPLFFSLPLLLSPSLPITMRFPARWRFPPWRAPSQPAAAFLF</sequence>
<name>P12I_HTL1C</name>
<reference key="1">
    <citation type="journal article" date="1988" name="J. Gen. Virol.">
        <title>Molecular cloning and complete nucleotide sequence of an adult T cell leukaemia virus/human T cell leukaemia virus type I (ATLV/HTLV-I) isolate of Caribbean origin: relationship to other members of the ATLV/HTLV-I subgroup.</title>
        <authorList>
            <person name="Malik K.T.A."/>
            <person name="Even J."/>
            <person name="Karpas A."/>
        </authorList>
    </citation>
    <scope>NUCLEOTIDE SEQUENCE [GENOMIC DNA]</scope>
</reference>
<reference key="2">
    <citation type="submission" date="1997-11" db="EMBL/GenBank/DDBJ databases">
        <authorList>
            <person name="Chappey C."/>
        </authorList>
    </citation>
    <scope>NUCLEOTIDE SEQUENCE [GENOMIC DNA]</scope>
</reference>
<organism>
    <name type="scientific">Human T-cell leukemia virus 1 (isolate Caribbea HS-35 subtype A)</name>
    <name type="common">HTLV-1</name>
    <dbReference type="NCBI Taxonomy" id="11927"/>
    <lineage>
        <taxon>Viruses</taxon>
        <taxon>Riboviria</taxon>
        <taxon>Pararnavirae</taxon>
        <taxon>Artverviricota</taxon>
        <taxon>Revtraviricetes</taxon>
        <taxon>Ortervirales</taxon>
        <taxon>Retroviridae</taxon>
        <taxon>Orthoretrovirinae</taxon>
        <taxon>Deltaretrovirus</taxon>
        <taxon>Primate T-lymphotropic virus 1</taxon>
    </lineage>
</organism>
<evidence type="ECO:0000250" key="1"/>
<evidence type="ECO:0000255" key="2"/>
<evidence type="ECO:0000305" key="3"/>
<accession>P0CK16</accession>
<protein>
    <recommendedName>
        <fullName>Accessory protein p12I</fullName>
    </recommendedName>
</protein>
<keyword id="KW-0025">Alternative splicing</keyword>
<keyword id="KW-1125">Evasion of host immunity by viral interleukin-like protein</keyword>
<keyword id="KW-1038">Host endoplasmic reticulum</keyword>
<keyword id="KW-1040">Host Golgi apparatus</keyword>
<keyword id="KW-1043">Host membrane</keyword>
<keyword id="KW-0945">Host-virus interaction</keyword>
<keyword id="KW-1080">Inhibition of host adaptive immune response by virus</keyword>
<keyword id="KW-1115">Inhibition of host MHC class I molecule presentation by virus</keyword>
<keyword id="KW-0472">Membrane</keyword>
<keyword id="KW-1185">Reference proteome</keyword>
<keyword id="KW-0729">SH3-binding</keyword>
<keyword id="KW-0812">Transmembrane</keyword>
<keyword id="KW-1133">Transmembrane helix</keyword>
<keyword id="KW-0832">Ubl conjugation</keyword>
<keyword id="KW-0899">Viral immunoevasion</keyword>
<proteinExistence type="inferred from homology"/>
<comment type="function">
    <text evidence="1">p12I is a modulator of T-lymphocyte proliferation and immune function and may contribute to establish a persistent infection. Binds and down-modulates cell surface expression of interleukin-2 receptors IL2RB and IL2RG. Also down-modulates cell surface MHC-I molecules by binding to free immature MHC-I heavy chains in the ER and targeting them to the proteasome for degradation. Binding to IL2RB mediates recruitment of JAK1 and JAK3. As a result of this interaction, p12I increases DNA-binding and transcriptional activity of STAT5 (By similarity).</text>
</comment>
<comment type="subunit">
    <text evidence="1">p12I is a homodimer. Interacts with human CANX, CALR, ATP6V0C, IL2RB, IL2RG. Binds to MHC-I heavy chains HLA-A2, HLA-B7 and HLA-Cw4 (By similarity).</text>
</comment>
<comment type="subcellular location">
    <subcellularLocation>
        <location evidence="1">Host endoplasmic reticulum membrane</location>
        <topology evidence="1">Multi-pass membrane protein</topology>
    </subcellularLocation>
    <subcellularLocation>
        <location evidence="3">Host Golgi apparatus</location>
        <location evidence="3">Host cis-Golgi network membrane</location>
        <topology evidence="3">Multi-pass membrane protein</topology>
    </subcellularLocation>
</comment>
<comment type="alternative products">
    <event type="alternative splicing"/>
    <isoform>
        <id>P0CK16-1</id>
        <name>p12I</name>
        <sequence type="displayed"/>
    </isoform>
    <isoform>
        <id>P0CK16-2</id>
        <name>p27I</name>
        <sequence type="described" ref="VSP_041272"/>
    </isoform>
</comment>
<comment type="PTM">
    <text evidence="1">Ubiquitinated; a fraction of P12I is degraded via the ubiquitin system.</text>
</comment>
<comment type="miscellaneous">
    <text>HTLV-1 lineages are divided in four clades, A (Cosmopolitan), B (Central African group), C (Melanesian group) and D (New Central African group).</text>
</comment>
<comment type="similarity">
    <text evidence="3">Belongs to the HTLV-1 accessory protein p12I family.</text>
</comment>
<dbReference type="EMBL" id="D13784">
    <property type="status" value="NOT_ANNOTATED_CDS"/>
    <property type="molecule type" value="Genomic_DNA"/>
</dbReference>
<dbReference type="EMBL" id="AF033817">
    <property type="status" value="NOT_ANNOTATED_CDS"/>
    <property type="molecule type" value="Genomic_DNA"/>
</dbReference>
<dbReference type="Proteomes" id="UP000001061">
    <property type="component" value="Segment"/>
</dbReference>
<dbReference type="Proteomes" id="UP000110593">
    <property type="component" value="Genome"/>
</dbReference>
<dbReference type="GO" id="GO:0044167">
    <property type="term" value="C:host cell endoplasmic reticulum membrane"/>
    <property type="evidence" value="ECO:0007669"/>
    <property type="project" value="UniProtKB-SubCell"/>
</dbReference>
<dbReference type="GO" id="GO:0044177">
    <property type="term" value="C:host cell Golgi apparatus"/>
    <property type="evidence" value="ECO:0007669"/>
    <property type="project" value="UniProtKB-SubCell"/>
</dbReference>
<dbReference type="GO" id="GO:0016020">
    <property type="term" value="C:membrane"/>
    <property type="evidence" value="ECO:0007669"/>
    <property type="project" value="UniProtKB-KW"/>
</dbReference>
<dbReference type="GO" id="GO:0017124">
    <property type="term" value="F:SH3 domain binding"/>
    <property type="evidence" value="ECO:0007669"/>
    <property type="project" value="UniProtKB-KW"/>
</dbReference>
<dbReference type="GO" id="GO:0046776">
    <property type="term" value="P:symbiont-mediated suppression of host antigen processing and presentation of peptide antigen via MHC class I"/>
    <property type="evidence" value="ECO:0007669"/>
    <property type="project" value="UniProtKB-KW"/>
</dbReference>
<dbReference type="InterPro" id="IPR021086">
    <property type="entry name" value="p12I"/>
</dbReference>
<dbReference type="Pfam" id="PF12233">
    <property type="entry name" value="p12I"/>
    <property type="match status" value="1"/>
</dbReference>